<organism>
    <name type="scientific">Phyllops falcatus</name>
    <name type="common">Cuban fig-eating bat</name>
    <dbReference type="NCBI Taxonomy" id="270772"/>
    <lineage>
        <taxon>Eukaryota</taxon>
        <taxon>Metazoa</taxon>
        <taxon>Chordata</taxon>
        <taxon>Craniata</taxon>
        <taxon>Vertebrata</taxon>
        <taxon>Euteleostomi</taxon>
        <taxon>Mammalia</taxon>
        <taxon>Eutheria</taxon>
        <taxon>Laurasiatheria</taxon>
        <taxon>Chiroptera</taxon>
        <taxon>Yangochiroptera</taxon>
        <taxon>Phyllostomidae</taxon>
        <taxon>Stenodermatinae</taxon>
        <taxon>Phyllops</taxon>
    </lineage>
</organism>
<comment type="function">
    <text evidence="2">Component of the ubiquinol-cytochrome c reductase complex (complex III or cytochrome b-c1 complex) that is part of the mitochondrial respiratory chain. The b-c1 complex mediates electron transfer from ubiquinol to cytochrome c. Contributes to the generation of a proton gradient across the mitochondrial membrane that is then used for ATP synthesis.</text>
</comment>
<comment type="cofactor">
    <cofactor evidence="2">
        <name>heme b</name>
        <dbReference type="ChEBI" id="CHEBI:60344"/>
    </cofactor>
    <text evidence="2">Binds 2 heme b groups non-covalently.</text>
</comment>
<comment type="subunit">
    <text evidence="2">The cytochrome bc1 complex contains 11 subunits: 3 respiratory subunits (MT-CYB, CYC1 and UQCRFS1), 2 core proteins (UQCRC1 and UQCRC2) and 6 low-molecular weight proteins (UQCRH/QCR6, UQCRB/QCR7, UQCRQ/QCR8, UQCR10/QCR9, UQCR11/QCR10 and a cleavage product of UQCRFS1). This cytochrome bc1 complex then forms a dimer.</text>
</comment>
<comment type="subcellular location">
    <subcellularLocation>
        <location evidence="2">Mitochondrion inner membrane</location>
        <topology evidence="2">Multi-pass membrane protein</topology>
    </subcellularLocation>
</comment>
<comment type="miscellaneous">
    <text evidence="1">Heme 1 (or BL or b562) is low-potential and absorbs at about 562 nm, and heme 2 (or BH or b566) is high-potential and absorbs at about 566 nm.</text>
</comment>
<comment type="similarity">
    <text evidence="3 4">Belongs to the cytochrome b family.</text>
</comment>
<comment type="caution">
    <text evidence="2">The full-length protein contains only eight transmembrane helices, not nine as predicted by bioinformatics tools.</text>
</comment>
<name>CYB_PHYFA</name>
<proteinExistence type="inferred from homology"/>
<protein>
    <recommendedName>
        <fullName>Cytochrome b</fullName>
    </recommendedName>
    <alternativeName>
        <fullName>Complex III subunit 3</fullName>
    </alternativeName>
    <alternativeName>
        <fullName>Complex III subunit III</fullName>
    </alternativeName>
    <alternativeName>
        <fullName>Cytochrome b-c1 complex subunit 3</fullName>
    </alternativeName>
    <alternativeName>
        <fullName>Ubiquinol-cytochrome-c reductase complex cytochrome b subunit</fullName>
    </alternativeName>
</protein>
<geneLocation type="mitochondrion"/>
<gene>
    <name type="primary">MT-CYB</name>
    <name type="synonym">COB</name>
    <name type="synonym">CYTB</name>
    <name type="synonym">MTCYB</name>
</gene>
<feature type="chain" id="PRO_0000254744" description="Cytochrome b">
    <location>
        <begin position="1"/>
        <end position="379"/>
    </location>
</feature>
<feature type="transmembrane region" description="Helical" evidence="2">
    <location>
        <begin position="33"/>
        <end position="53"/>
    </location>
</feature>
<feature type="transmembrane region" description="Helical" evidence="2">
    <location>
        <begin position="77"/>
        <end position="98"/>
    </location>
</feature>
<feature type="transmembrane region" description="Helical" evidence="2">
    <location>
        <begin position="113"/>
        <end position="133"/>
    </location>
</feature>
<feature type="transmembrane region" description="Helical" evidence="2">
    <location>
        <begin position="178"/>
        <end position="198"/>
    </location>
</feature>
<feature type="transmembrane region" description="Helical" evidence="2">
    <location>
        <begin position="226"/>
        <end position="246"/>
    </location>
</feature>
<feature type="transmembrane region" description="Helical" evidence="2">
    <location>
        <begin position="288"/>
        <end position="308"/>
    </location>
</feature>
<feature type="transmembrane region" description="Helical" evidence="2">
    <location>
        <begin position="320"/>
        <end position="340"/>
    </location>
</feature>
<feature type="transmembrane region" description="Helical" evidence="2">
    <location>
        <begin position="347"/>
        <end position="367"/>
    </location>
</feature>
<feature type="binding site" description="axial binding residue" evidence="2">
    <location>
        <position position="83"/>
    </location>
    <ligand>
        <name>heme b</name>
        <dbReference type="ChEBI" id="CHEBI:60344"/>
        <label>b562</label>
    </ligand>
    <ligandPart>
        <name>Fe</name>
        <dbReference type="ChEBI" id="CHEBI:18248"/>
    </ligandPart>
</feature>
<feature type="binding site" description="axial binding residue" evidence="2">
    <location>
        <position position="97"/>
    </location>
    <ligand>
        <name>heme b</name>
        <dbReference type="ChEBI" id="CHEBI:60344"/>
        <label>b566</label>
    </ligand>
    <ligandPart>
        <name>Fe</name>
        <dbReference type="ChEBI" id="CHEBI:18248"/>
    </ligandPart>
</feature>
<feature type="binding site" description="axial binding residue" evidence="2">
    <location>
        <position position="182"/>
    </location>
    <ligand>
        <name>heme b</name>
        <dbReference type="ChEBI" id="CHEBI:60344"/>
        <label>b562</label>
    </ligand>
    <ligandPart>
        <name>Fe</name>
        <dbReference type="ChEBI" id="CHEBI:18248"/>
    </ligandPart>
</feature>
<feature type="binding site" description="axial binding residue" evidence="2">
    <location>
        <position position="196"/>
    </location>
    <ligand>
        <name>heme b</name>
        <dbReference type="ChEBI" id="CHEBI:60344"/>
        <label>b566</label>
    </ligand>
    <ligandPart>
        <name>Fe</name>
        <dbReference type="ChEBI" id="CHEBI:18248"/>
    </ligandPart>
</feature>
<feature type="binding site" evidence="2">
    <location>
        <position position="201"/>
    </location>
    <ligand>
        <name>a ubiquinone</name>
        <dbReference type="ChEBI" id="CHEBI:16389"/>
    </ligand>
</feature>
<reference key="1">
    <citation type="journal article" date="2007" name="J. Biogeogr.">
        <title>Short-faced bats (Phyllostomidae: Stenodermatina): a Caribbean radiation of strict frugivores.</title>
        <authorList>
            <person name="Davalos L.M."/>
        </authorList>
        <dbReference type="AGRICOLA" id="IND43870880"/>
    </citation>
    <scope>NUCLEOTIDE SEQUENCE [GENOMIC DNA]</scope>
</reference>
<evidence type="ECO:0000250" key="1"/>
<evidence type="ECO:0000250" key="2">
    <source>
        <dbReference type="UniProtKB" id="P00157"/>
    </source>
</evidence>
<evidence type="ECO:0000255" key="3">
    <source>
        <dbReference type="PROSITE-ProRule" id="PRU00967"/>
    </source>
</evidence>
<evidence type="ECO:0000255" key="4">
    <source>
        <dbReference type="PROSITE-ProRule" id="PRU00968"/>
    </source>
</evidence>
<sequence>MTNIRKTHPLLKIINSSFVDLPAPSSLSSWWNFGSLLGVCLGVQILTGLFLAMHYTSDTATAFNSVTHICRDVNYGWLLRYLHANGASMFFICLYLHVGRGLYYGSYTYSETWNVGILLLFAVMATAFMGYVLPWGQMSFWGATVITNLLSAIPYIGTELVQWIWGGFSVDKATLTRFFAFHFLLPFIVAALVMVHLLFLHETGSNNPTGIPSDPDMIPFHPYYTIKDILGFLIMLTALSTLVLFSPDLLGDPDNYIPANPLNTPPHIKPEWYFLFAYAILRSIPNKLGGVLALVMSILILAIVPILHMSKQRSMMFRPLSQCLFWLLVAILFTLTWIGGQPVEHPYIIIGQTASILYFLIILIFMPAISLMENYLLKW</sequence>
<accession>Q53AK6</accession>
<keyword id="KW-0249">Electron transport</keyword>
<keyword id="KW-0349">Heme</keyword>
<keyword id="KW-0408">Iron</keyword>
<keyword id="KW-0472">Membrane</keyword>
<keyword id="KW-0479">Metal-binding</keyword>
<keyword id="KW-0496">Mitochondrion</keyword>
<keyword id="KW-0999">Mitochondrion inner membrane</keyword>
<keyword id="KW-0679">Respiratory chain</keyword>
<keyword id="KW-0812">Transmembrane</keyword>
<keyword id="KW-1133">Transmembrane helix</keyword>
<keyword id="KW-0813">Transport</keyword>
<keyword id="KW-0830">Ubiquinone</keyword>
<dbReference type="EMBL" id="AY604447">
    <property type="protein sequence ID" value="AAT46150.1"/>
    <property type="molecule type" value="Genomic_DNA"/>
</dbReference>
<dbReference type="EMBL" id="AY604448">
    <property type="protein sequence ID" value="AAT46151.1"/>
    <property type="molecule type" value="Genomic_DNA"/>
</dbReference>
<dbReference type="EMBL" id="AY604449">
    <property type="protein sequence ID" value="AAT46152.1"/>
    <property type="molecule type" value="Genomic_DNA"/>
</dbReference>
<dbReference type="EMBL" id="AY604450">
    <property type="protein sequence ID" value="AAT46153.1"/>
    <property type="molecule type" value="Genomic_DNA"/>
</dbReference>
<dbReference type="EMBL" id="DQ211651">
    <property type="protein sequence ID" value="ABA62324.1"/>
    <property type="molecule type" value="Genomic_DNA"/>
</dbReference>
<dbReference type="SMR" id="Q53AK6"/>
<dbReference type="GO" id="GO:0005743">
    <property type="term" value="C:mitochondrial inner membrane"/>
    <property type="evidence" value="ECO:0007669"/>
    <property type="project" value="UniProtKB-SubCell"/>
</dbReference>
<dbReference type="GO" id="GO:0045275">
    <property type="term" value="C:respiratory chain complex III"/>
    <property type="evidence" value="ECO:0007669"/>
    <property type="project" value="InterPro"/>
</dbReference>
<dbReference type="GO" id="GO:0046872">
    <property type="term" value="F:metal ion binding"/>
    <property type="evidence" value="ECO:0007669"/>
    <property type="project" value="UniProtKB-KW"/>
</dbReference>
<dbReference type="GO" id="GO:0008121">
    <property type="term" value="F:ubiquinol-cytochrome-c reductase activity"/>
    <property type="evidence" value="ECO:0007669"/>
    <property type="project" value="InterPro"/>
</dbReference>
<dbReference type="GO" id="GO:0006122">
    <property type="term" value="P:mitochondrial electron transport, ubiquinol to cytochrome c"/>
    <property type="evidence" value="ECO:0007669"/>
    <property type="project" value="TreeGrafter"/>
</dbReference>
<dbReference type="CDD" id="cd00290">
    <property type="entry name" value="cytochrome_b_C"/>
    <property type="match status" value="1"/>
</dbReference>
<dbReference type="CDD" id="cd00284">
    <property type="entry name" value="Cytochrome_b_N"/>
    <property type="match status" value="1"/>
</dbReference>
<dbReference type="FunFam" id="1.20.810.10:FF:000002">
    <property type="entry name" value="Cytochrome b"/>
    <property type="match status" value="1"/>
</dbReference>
<dbReference type="Gene3D" id="1.20.810.10">
    <property type="entry name" value="Cytochrome Bc1 Complex, Chain C"/>
    <property type="match status" value="1"/>
</dbReference>
<dbReference type="InterPro" id="IPR005798">
    <property type="entry name" value="Cyt_b/b6_C"/>
</dbReference>
<dbReference type="InterPro" id="IPR036150">
    <property type="entry name" value="Cyt_b/b6_C_sf"/>
</dbReference>
<dbReference type="InterPro" id="IPR005797">
    <property type="entry name" value="Cyt_b/b6_N"/>
</dbReference>
<dbReference type="InterPro" id="IPR027387">
    <property type="entry name" value="Cytb/b6-like_sf"/>
</dbReference>
<dbReference type="InterPro" id="IPR030689">
    <property type="entry name" value="Cytochrome_b"/>
</dbReference>
<dbReference type="InterPro" id="IPR048260">
    <property type="entry name" value="Cytochrome_b_C_euk/bac"/>
</dbReference>
<dbReference type="InterPro" id="IPR048259">
    <property type="entry name" value="Cytochrome_b_N_euk/bac"/>
</dbReference>
<dbReference type="InterPro" id="IPR016174">
    <property type="entry name" value="Di-haem_cyt_TM"/>
</dbReference>
<dbReference type="PANTHER" id="PTHR19271">
    <property type="entry name" value="CYTOCHROME B"/>
    <property type="match status" value="1"/>
</dbReference>
<dbReference type="PANTHER" id="PTHR19271:SF16">
    <property type="entry name" value="CYTOCHROME B"/>
    <property type="match status" value="1"/>
</dbReference>
<dbReference type="Pfam" id="PF00032">
    <property type="entry name" value="Cytochrom_B_C"/>
    <property type="match status" value="1"/>
</dbReference>
<dbReference type="Pfam" id="PF00033">
    <property type="entry name" value="Cytochrome_B"/>
    <property type="match status" value="1"/>
</dbReference>
<dbReference type="PIRSF" id="PIRSF038885">
    <property type="entry name" value="COB"/>
    <property type="match status" value="1"/>
</dbReference>
<dbReference type="SUPFAM" id="SSF81648">
    <property type="entry name" value="a domain/subunit of cytochrome bc1 complex (Ubiquinol-cytochrome c reductase)"/>
    <property type="match status" value="1"/>
</dbReference>
<dbReference type="SUPFAM" id="SSF81342">
    <property type="entry name" value="Transmembrane di-heme cytochromes"/>
    <property type="match status" value="1"/>
</dbReference>
<dbReference type="PROSITE" id="PS51003">
    <property type="entry name" value="CYTB_CTER"/>
    <property type="match status" value="1"/>
</dbReference>
<dbReference type="PROSITE" id="PS51002">
    <property type="entry name" value="CYTB_NTER"/>
    <property type="match status" value="1"/>
</dbReference>